<sequence>MLKKNDIVEVEIVDLTHEGAGVAKVDGLVFFVENALPSEKILMRVLKVNKKIGFGKVEKYLVQSPHRNQDLDLAYLRSGIADLGHLSYPEQLKFKTKQVKDSLYKIAGIADVEVAETLGMEHPVKYRNKAQVPVRRVNGVLETGFFRKNSHNLMPLEDFFIQDPVIDQVVVALRDLLRRFDLKPYDEKEQSGLIRNLVVRRGHYSGQIMVVLVTTRPKVFRVDQLIEQVIKQFPEIVSVMQNINDQNTNAIFGKEWRTLYGQDYITDQMLGNDFQIAGLAFYQVNTEMAEKLYQTAIDFAELKKDDVVIDAYSGIGTIGLSVAKHVKEVYGVELIPEAVENSKKNAQLNNISNAHYVCDTAENAMKNWLKDGIQPTVILVDPPRKGLTESFIKASAQTGADRIAYISCNVATMARDIKLYQELGYELKKVQPVDLFPQTHHVETVALLSKLDVDKHISVEIELDEMDLTSAESKATYAQIKEYVWNKFELKVSTLYIAQIKKKCGIELREHYNKSKKDKQIIPQCTPEKEEAIMDALRHFKMI</sequence>
<reference key="1">
    <citation type="journal article" date="2001" name="J. Bacteriol.">
        <title>Genome of the bacterium Streptococcus pneumoniae strain R6.</title>
        <authorList>
            <person name="Hoskins J."/>
            <person name="Alborn W.E. Jr."/>
            <person name="Arnold J."/>
            <person name="Blaszczak L.C."/>
            <person name="Burgett S."/>
            <person name="DeHoff B.S."/>
            <person name="Estrem S.T."/>
            <person name="Fritz L."/>
            <person name="Fu D.-J."/>
            <person name="Fuller W."/>
            <person name="Geringer C."/>
            <person name="Gilmour R."/>
            <person name="Glass J.S."/>
            <person name="Khoja H."/>
            <person name="Kraft A.R."/>
            <person name="Lagace R.E."/>
            <person name="LeBlanc D.J."/>
            <person name="Lee L.N."/>
            <person name="Lefkowitz E.J."/>
            <person name="Lu J."/>
            <person name="Matsushima P."/>
            <person name="McAhren S.M."/>
            <person name="McHenney M."/>
            <person name="McLeaster K."/>
            <person name="Mundy C.W."/>
            <person name="Nicas T.I."/>
            <person name="Norris F.H."/>
            <person name="O'Gara M."/>
            <person name="Peery R.B."/>
            <person name="Robertson G.T."/>
            <person name="Rockey P."/>
            <person name="Sun P.-M."/>
            <person name="Winkler M.E."/>
            <person name="Yang Y."/>
            <person name="Young-Bellido M."/>
            <person name="Zhao G."/>
            <person name="Zook C.A."/>
            <person name="Baltz R.H."/>
            <person name="Jaskunas S.R."/>
            <person name="Rosteck P.R. Jr."/>
            <person name="Skatrud P.L."/>
            <person name="Glass J.I."/>
        </authorList>
    </citation>
    <scope>NUCLEOTIDE SEQUENCE [LARGE SCALE GENOMIC DNA]</scope>
    <source>
        <strain>ATCC BAA-255 / R6</strain>
    </source>
</reference>
<accession>Q8DPY7</accession>
<gene>
    <name type="ordered locus">spr0932</name>
</gene>
<keyword id="KW-0489">Methyltransferase</keyword>
<keyword id="KW-1185">Reference proteome</keyword>
<keyword id="KW-0949">S-adenosyl-L-methionine</keyword>
<keyword id="KW-0808">Transferase</keyword>
<dbReference type="EC" id="2.1.1.-"/>
<dbReference type="EMBL" id="AE007317">
    <property type="protein sequence ID" value="AAK99736.1"/>
    <property type="molecule type" value="Genomic_DNA"/>
</dbReference>
<dbReference type="PIR" id="D97988">
    <property type="entry name" value="D97988"/>
</dbReference>
<dbReference type="RefSeq" id="NP_358526.1">
    <property type="nucleotide sequence ID" value="NC_003098.1"/>
</dbReference>
<dbReference type="RefSeq" id="WP_000914581.1">
    <property type="nucleotide sequence ID" value="NC_003098.1"/>
</dbReference>
<dbReference type="SMR" id="Q8DPY7"/>
<dbReference type="STRING" id="171101.spr0932"/>
<dbReference type="DNASU" id="933763"/>
<dbReference type="KEGG" id="spr:spr0932"/>
<dbReference type="PATRIC" id="fig|171101.6.peg.1019"/>
<dbReference type="eggNOG" id="COG2265">
    <property type="taxonomic scope" value="Bacteria"/>
</dbReference>
<dbReference type="HOGENOM" id="CLU_014689_7_0_9"/>
<dbReference type="Proteomes" id="UP000000586">
    <property type="component" value="Chromosome"/>
</dbReference>
<dbReference type="GO" id="GO:0070041">
    <property type="term" value="F:rRNA (uridine-C5-)-methyltransferase activity"/>
    <property type="evidence" value="ECO:0000318"/>
    <property type="project" value="GO_Central"/>
</dbReference>
<dbReference type="GO" id="GO:0070475">
    <property type="term" value="P:rRNA base methylation"/>
    <property type="evidence" value="ECO:0000318"/>
    <property type="project" value="GO_Central"/>
</dbReference>
<dbReference type="CDD" id="cd02440">
    <property type="entry name" value="AdoMet_MTases"/>
    <property type="match status" value="1"/>
</dbReference>
<dbReference type="FunFam" id="3.40.50.150:FF:000009">
    <property type="entry name" value="23S rRNA (Uracil(1939)-C(5))-methyltransferase RlmD"/>
    <property type="match status" value="1"/>
</dbReference>
<dbReference type="FunFam" id="2.40.50.1070:FF:000003">
    <property type="entry name" value="23S rRNA (Uracil-5-)-methyltransferase RumA"/>
    <property type="match status" value="1"/>
</dbReference>
<dbReference type="Gene3D" id="2.40.50.1070">
    <property type="match status" value="1"/>
</dbReference>
<dbReference type="Gene3D" id="2.40.50.140">
    <property type="entry name" value="Nucleic acid-binding proteins"/>
    <property type="match status" value="1"/>
</dbReference>
<dbReference type="Gene3D" id="3.40.50.150">
    <property type="entry name" value="Vaccinia Virus protein VP39"/>
    <property type="match status" value="1"/>
</dbReference>
<dbReference type="InterPro" id="IPR030390">
    <property type="entry name" value="MeTrfase_TrmA_AS"/>
</dbReference>
<dbReference type="InterPro" id="IPR030391">
    <property type="entry name" value="MeTrfase_TrmA_CS"/>
</dbReference>
<dbReference type="InterPro" id="IPR012340">
    <property type="entry name" value="NA-bd_OB-fold"/>
</dbReference>
<dbReference type="InterPro" id="IPR029063">
    <property type="entry name" value="SAM-dependent_MTases_sf"/>
</dbReference>
<dbReference type="InterPro" id="IPR002792">
    <property type="entry name" value="TRAM_dom"/>
</dbReference>
<dbReference type="InterPro" id="IPR010280">
    <property type="entry name" value="U5_MeTrfase_fam"/>
</dbReference>
<dbReference type="NCBIfam" id="TIGR00479">
    <property type="entry name" value="rumA"/>
    <property type="match status" value="1"/>
</dbReference>
<dbReference type="PANTHER" id="PTHR11061">
    <property type="entry name" value="RNA M5U METHYLTRANSFERASE"/>
    <property type="match status" value="1"/>
</dbReference>
<dbReference type="PANTHER" id="PTHR11061:SF30">
    <property type="entry name" value="TRNA (URACIL(54)-C(5))-METHYLTRANSFERASE"/>
    <property type="match status" value="1"/>
</dbReference>
<dbReference type="Pfam" id="PF01938">
    <property type="entry name" value="TRAM"/>
    <property type="match status" value="1"/>
</dbReference>
<dbReference type="Pfam" id="PF05958">
    <property type="entry name" value="tRNA_U5-meth_tr"/>
    <property type="match status" value="1"/>
</dbReference>
<dbReference type="SUPFAM" id="SSF50249">
    <property type="entry name" value="Nucleic acid-binding proteins"/>
    <property type="match status" value="1"/>
</dbReference>
<dbReference type="SUPFAM" id="SSF53335">
    <property type="entry name" value="S-adenosyl-L-methionine-dependent methyltransferases"/>
    <property type="match status" value="1"/>
</dbReference>
<dbReference type="PROSITE" id="PS51687">
    <property type="entry name" value="SAM_MT_RNA_M5U"/>
    <property type="match status" value="1"/>
</dbReference>
<dbReference type="PROSITE" id="PS50926">
    <property type="entry name" value="TRAM"/>
    <property type="match status" value="1"/>
</dbReference>
<dbReference type="PROSITE" id="PS01230">
    <property type="entry name" value="TRMA_1"/>
    <property type="match status" value="1"/>
</dbReference>
<dbReference type="PROSITE" id="PS01231">
    <property type="entry name" value="TRMA_2"/>
    <property type="match status" value="1"/>
</dbReference>
<organism>
    <name type="scientific">Streptococcus pneumoniae (strain ATCC BAA-255 / R6)</name>
    <dbReference type="NCBI Taxonomy" id="171101"/>
    <lineage>
        <taxon>Bacteria</taxon>
        <taxon>Bacillati</taxon>
        <taxon>Bacillota</taxon>
        <taxon>Bacilli</taxon>
        <taxon>Lactobacillales</taxon>
        <taxon>Streptococcaceae</taxon>
        <taxon>Streptococcus</taxon>
    </lineage>
</organism>
<comment type="similarity">
    <text evidence="2">Belongs to the class I-like SAM-binding methyltransferase superfamily. RNA M5U methyltransferase family.</text>
</comment>
<proteinExistence type="inferred from homology"/>
<name>Y932_STRR6</name>
<feature type="chain" id="PRO_0000162033" description="Uncharacterized RNA methyltransferase spr0932">
    <location>
        <begin position="1"/>
        <end position="543"/>
    </location>
</feature>
<feature type="domain" description="TRAM" evidence="1">
    <location>
        <begin position="1"/>
        <end position="59"/>
    </location>
</feature>
<feature type="active site" description="Nucleophile" evidence="2">
    <location>
        <position position="408"/>
    </location>
</feature>
<feature type="binding site" evidence="2">
    <location>
        <position position="283"/>
    </location>
    <ligand>
        <name>S-adenosyl-L-methionine</name>
        <dbReference type="ChEBI" id="CHEBI:59789"/>
    </ligand>
</feature>
<feature type="binding site" evidence="2">
    <location>
        <position position="312"/>
    </location>
    <ligand>
        <name>S-adenosyl-L-methionine</name>
        <dbReference type="ChEBI" id="CHEBI:59789"/>
    </ligand>
</feature>
<feature type="binding site" evidence="2">
    <location>
        <position position="333"/>
    </location>
    <ligand>
        <name>S-adenosyl-L-methionine</name>
        <dbReference type="ChEBI" id="CHEBI:59789"/>
    </ligand>
</feature>
<feature type="binding site" evidence="2">
    <location>
        <position position="381"/>
    </location>
    <ligand>
        <name>S-adenosyl-L-methionine</name>
        <dbReference type="ChEBI" id="CHEBI:59789"/>
    </ligand>
</feature>
<protein>
    <recommendedName>
        <fullName>Uncharacterized RNA methyltransferase spr0932</fullName>
        <ecNumber>2.1.1.-</ecNumber>
    </recommendedName>
</protein>
<evidence type="ECO:0000255" key="1">
    <source>
        <dbReference type="PROSITE-ProRule" id="PRU00208"/>
    </source>
</evidence>
<evidence type="ECO:0000255" key="2">
    <source>
        <dbReference type="PROSITE-ProRule" id="PRU01024"/>
    </source>
</evidence>